<comment type="function">
    <text>This protein is a component of the reaction center of photosystem II. Its exact function is not yet known.</text>
</comment>
<comment type="function">
    <text evidence="1">One of the components of the core complex of photosystem II (PSII), required for its stability and/or assembly. PSII is a light-driven water:plastoquinone oxidoreductase that uses light energy to abstract electrons from H(2)O, generating O(2) and a proton gradient subsequently used for ATP formation. It consists of a core antenna complex that captures photons, and an electron transfer chain that converts photonic excitation into a charge separation.</text>
</comment>
<comment type="subunit">
    <text evidence="1">PSII is composed of 1 copy each of membrane proteins PsbA, PsbB, PsbC, PsbD, PsbE, PsbF, PsbH, PsbI, PsbJ, PsbK, PsbL, PsbM, PsbT, PsbX, PsbY, PsbZ, Psb30/Ycf12, at least 3 peripheral proteins of the oxygen-evolving complex and a large number of cofactors. It forms dimeric complexes.</text>
</comment>
<comment type="subcellular location">
    <subcellularLocation>
        <location evidence="1">Plastid</location>
        <location evidence="1">Chloroplast thylakoid membrane</location>
        <topology evidence="1">Single-pass membrane protein</topology>
    </subcellularLocation>
</comment>
<comment type="similarity">
    <text evidence="1">Belongs to the PsbI family.</text>
</comment>
<gene>
    <name evidence="1" type="primary">psbI</name>
    <name type="ordered locus">CsCp007</name>
</gene>
<accession>Q4VZP9</accession>
<accession>A5J201</accession>
<reference key="1">
    <citation type="journal article" date="2006" name="Plant Cell Rep.">
        <title>Complete sequence and organization of the cucumber (Cucumis sativus L. cv. Baekmibaekdadagi) chloroplast genome.</title>
        <authorList>
            <person name="Kim J.-S."/>
            <person name="Jung J.D."/>
            <person name="Lee J.-A."/>
            <person name="Park H.-W."/>
            <person name="Oh K.-H."/>
            <person name="Jeong W.J."/>
            <person name="Choi D.-W."/>
            <person name="Liu J.R."/>
            <person name="Cho K.Y."/>
        </authorList>
    </citation>
    <scope>NUCLEOTIDE SEQUENCE [LARGE SCALE GENOMIC DNA]</scope>
    <source>
        <strain>cv. Baekmibaekdadagi</strain>
    </source>
</reference>
<reference key="2">
    <citation type="journal article" date="2007" name="Cell. Mol. Biol. Lett.">
        <title>The complete structure of the cucumber (Cucumis sativus L.) chloroplast genome: its composition and comparative analysis.</title>
        <authorList>
            <person name="Plader W.W."/>
            <person name="Yukawa Y."/>
            <person name="Sugiura M."/>
            <person name="Malepszy S."/>
        </authorList>
    </citation>
    <scope>NUCLEOTIDE SEQUENCE [LARGE SCALE GENOMIC DNA]</scope>
    <source>
        <strain>cv. Borszczagowski</strain>
    </source>
</reference>
<reference key="3">
    <citation type="journal article" date="2007" name="Genome">
        <title>Sequencing cucumber (Cucumis sativus L.) chloroplast genomes identifies differences between chilling-tolerant and -susceptible cucumber lines.</title>
        <authorList>
            <person name="Chung S.-M."/>
            <person name="Gordon V.S."/>
            <person name="Staub J.E."/>
        </authorList>
    </citation>
    <scope>NUCLEOTIDE SEQUENCE [LARGE SCALE GENOMIC DNA]</scope>
    <source>
        <strain>cv. Chipper</strain>
        <strain>cv. Gy14</strain>
    </source>
</reference>
<protein>
    <recommendedName>
        <fullName evidence="1">Photosystem II reaction center protein I</fullName>
        <shortName evidence="1">PSII-I</shortName>
    </recommendedName>
    <alternativeName>
        <fullName evidence="1">PSII 4.8 kDa protein</fullName>
    </alternativeName>
</protein>
<keyword id="KW-0150">Chloroplast</keyword>
<keyword id="KW-0472">Membrane</keyword>
<keyword id="KW-0602">Photosynthesis</keyword>
<keyword id="KW-0604">Photosystem II</keyword>
<keyword id="KW-0934">Plastid</keyword>
<keyword id="KW-0674">Reaction center</keyword>
<keyword id="KW-0793">Thylakoid</keyword>
<keyword id="KW-0812">Transmembrane</keyword>
<keyword id="KW-1133">Transmembrane helix</keyword>
<proteinExistence type="inferred from homology"/>
<evidence type="ECO:0000255" key="1">
    <source>
        <dbReference type="HAMAP-Rule" id="MF_01316"/>
    </source>
</evidence>
<organism>
    <name type="scientific">Cucumis sativus</name>
    <name type="common">Cucumber</name>
    <dbReference type="NCBI Taxonomy" id="3659"/>
    <lineage>
        <taxon>Eukaryota</taxon>
        <taxon>Viridiplantae</taxon>
        <taxon>Streptophyta</taxon>
        <taxon>Embryophyta</taxon>
        <taxon>Tracheophyta</taxon>
        <taxon>Spermatophyta</taxon>
        <taxon>Magnoliopsida</taxon>
        <taxon>eudicotyledons</taxon>
        <taxon>Gunneridae</taxon>
        <taxon>Pentapetalae</taxon>
        <taxon>rosids</taxon>
        <taxon>fabids</taxon>
        <taxon>Cucurbitales</taxon>
        <taxon>Cucurbitaceae</taxon>
        <taxon>Benincaseae</taxon>
        <taxon>Cucumis</taxon>
    </lineage>
</organism>
<dbReference type="EMBL" id="DQ119058">
    <property type="protein sequence ID" value="AAZ94636.1"/>
    <property type="molecule type" value="Genomic_DNA"/>
</dbReference>
<dbReference type="EMBL" id="AJ970307">
    <property type="protein sequence ID" value="CAJ00742.1"/>
    <property type="molecule type" value="Genomic_DNA"/>
</dbReference>
<dbReference type="EMBL" id="DQ865975">
    <property type="status" value="NOT_ANNOTATED_CDS"/>
    <property type="molecule type" value="Genomic_DNA"/>
</dbReference>
<dbReference type="EMBL" id="DQ865976">
    <property type="protein sequence ID" value="ABI98729.1"/>
    <property type="molecule type" value="Genomic_DNA"/>
</dbReference>
<dbReference type="RefSeq" id="YP_247583.1">
    <property type="nucleotide sequence ID" value="NC_007144.1"/>
</dbReference>
<dbReference type="SMR" id="Q4VZP9"/>
<dbReference type="GeneID" id="3429282"/>
<dbReference type="KEGG" id="csv:3429282"/>
<dbReference type="OrthoDB" id="564007at2759"/>
<dbReference type="GO" id="GO:0009535">
    <property type="term" value="C:chloroplast thylakoid membrane"/>
    <property type="evidence" value="ECO:0007669"/>
    <property type="project" value="UniProtKB-SubCell"/>
</dbReference>
<dbReference type="GO" id="GO:0009539">
    <property type="term" value="C:photosystem II reaction center"/>
    <property type="evidence" value="ECO:0007669"/>
    <property type="project" value="InterPro"/>
</dbReference>
<dbReference type="GO" id="GO:0015979">
    <property type="term" value="P:photosynthesis"/>
    <property type="evidence" value="ECO:0007669"/>
    <property type="project" value="UniProtKB-UniRule"/>
</dbReference>
<dbReference type="HAMAP" id="MF_01316">
    <property type="entry name" value="PSII_PsbI"/>
    <property type="match status" value="1"/>
</dbReference>
<dbReference type="InterPro" id="IPR003686">
    <property type="entry name" value="PSII_PsbI"/>
</dbReference>
<dbReference type="InterPro" id="IPR037271">
    <property type="entry name" value="PSII_PsbI_sf"/>
</dbReference>
<dbReference type="NCBIfam" id="NF002735">
    <property type="entry name" value="PRK02655.1"/>
    <property type="match status" value="1"/>
</dbReference>
<dbReference type="PANTHER" id="PTHR35772">
    <property type="entry name" value="PHOTOSYSTEM II REACTION CENTER PROTEIN I"/>
    <property type="match status" value="1"/>
</dbReference>
<dbReference type="PANTHER" id="PTHR35772:SF1">
    <property type="entry name" value="PHOTOSYSTEM II REACTION CENTER PROTEIN I"/>
    <property type="match status" value="1"/>
</dbReference>
<dbReference type="Pfam" id="PF02532">
    <property type="entry name" value="PsbI"/>
    <property type="match status" value="1"/>
</dbReference>
<dbReference type="SUPFAM" id="SSF161041">
    <property type="entry name" value="Photosystem II reaction center protein I, PsbI"/>
    <property type="match status" value="1"/>
</dbReference>
<sequence>MLTLKLFVYTVVIFFVSLFIFGFLSNDPGRNPGREE</sequence>
<geneLocation type="chloroplast"/>
<feature type="chain" id="PRO_0000275788" description="Photosystem II reaction center protein I">
    <location>
        <begin position="1"/>
        <end position="36"/>
    </location>
</feature>
<feature type="transmembrane region" description="Helical" evidence="1">
    <location>
        <begin position="4"/>
        <end position="24"/>
    </location>
</feature>
<name>PSBI_CUCSA</name>